<accession>Q77CE4</accession>
<gene>
    <name evidence="1" type="primary">gN</name>
    <name type="ORF">UL49.5</name>
</gene>
<protein>
    <recommendedName>
        <fullName evidence="1">Envelope glycoprotein N</fullName>
    </recommendedName>
</protein>
<proteinExistence type="evidence at protein level"/>
<reference key="1">
    <citation type="journal article" date="1996" name="Vet. Microbiol.">
        <title>Gene contents in a 31-kb segment at the left genome end of bovine herpesvirus-1.</title>
        <authorList>
            <person name="Schwyzer M."/>
            <person name="Styger D."/>
            <person name="Vogt B."/>
            <person name="Lowery D.E."/>
            <person name="Simard C."/>
            <person name="LaBoissiere S."/>
            <person name="Misra V."/>
            <person name="Vlcek C."/>
            <person name="Paces V."/>
        </authorList>
    </citation>
    <scope>NUCLEOTIDE SEQUENCE [GENOMIC DNA]</scope>
</reference>
<reference key="2">
    <citation type="submission" date="1997-09" db="EMBL/GenBank/DDBJ databases">
        <title>Complete DNA sequence of bovine herpesvirus 1.</title>
        <authorList>
            <person name="Schwyzer M."/>
            <person name="Paces V."/>
            <person name="Letchworth G.J."/>
            <person name="Misra V."/>
            <person name="Buhk H.J."/>
            <person name="Lowery D.E."/>
            <person name="Simard C."/>
            <person name="Bello L.J."/>
            <person name="Thiry E."/>
            <person name="Vlcek C."/>
        </authorList>
    </citation>
    <scope>NUCLEOTIDE SEQUENCE [LARGE SCALE GENOMIC DNA]</scope>
</reference>
<reference key="3">
    <citation type="journal article" date="1998" name="J. Virol.">
        <title>Bovine herpesvirus 1 glycoprotein M forms a disulfide-linked heterodimer with the U(L)49.5 protein.</title>
        <authorList>
            <person name="Wu S.X."/>
            <person name="Zhu X.P."/>
            <person name="Letchworth G.J."/>
        </authorList>
    </citation>
    <scope>SUBUNIT</scope>
    <scope>DISULFIDE BOND</scope>
</reference>
<organismHost>
    <name type="scientific">Bos taurus</name>
    <name type="common">Bovine</name>
    <dbReference type="NCBI Taxonomy" id="9913"/>
</organismHost>
<feature type="signal peptide" evidence="1">
    <location>
        <begin position="1"/>
        <end position="21"/>
    </location>
</feature>
<feature type="chain" id="PRO_0000339174" description="Envelope glycoprotein N" evidence="1">
    <location>
        <begin position="22"/>
        <end position="96"/>
    </location>
</feature>
<feature type="topological domain" description="Virion surface" evidence="1">
    <location>
        <begin position="22"/>
        <end position="54"/>
    </location>
</feature>
<feature type="transmembrane region" description="Helical" evidence="1">
    <location>
        <begin position="55"/>
        <end position="75"/>
    </location>
</feature>
<feature type="topological domain" description="Intravirion" evidence="1">
    <location>
        <begin position="76"/>
        <end position="96"/>
    </location>
</feature>
<feature type="disulfide bond" description="Interchain (with gM)" evidence="1">
    <location>
        <position position="42"/>
    </location>
</feature>
<evidence type="ECO:0000255" key="1">
    <source>
        <dbReference type="HAMAP-Rule" id="MF_04037"/>
    </source>
</evidence>
<sequence length="96" mass="10260">MPRSPLIVAVVAAALFAIVRGRDPLLDAMRREGAMDFWSAGCYARGVPLSEPPQALVVFYVALTAVMVAVALYAYGLCFRLMGASGPNKKESRGRG</sequence>
<keyword id="KW-1015">Disulfide bond</keyword>
<keyword id="KW-1040">Host Golgi apparatus</keyword>
<keyword id="KW-1043">Host membrane</keyword>
<keyword id="KW-0472">Membrane</keyword>
<keyword id="KW-0732">Signal</keyword>
<keyword id="KW-0812">Transmembrane</keyword>
<keyword id="KW-1133">Transmembrane helix</keyword>
<keyword id="KW-0261">Viral envelope protein</keyword>
<keyword id="KW-0946">Virion</keyword>
<organism>
    <name type="scientific">Bovine herpesvirus 1.1 (strain Cooper)</name>
    <name type="common">BoHV-1</name>
    <name type="synonym">Infectious bovine rhinotracheitis virus</name>
    <dbReference type="NCBI Taxonomy" id="10323"/>
    <lineage>
        <taxon>Viruses</taxon>
        <taxon>Duplodnaviria</taxon>
        <taxon>Heunggongvirae</taxon>
        <taxon>Peploviricota</taxon>
        <taxon>Herviviricetes</taxon>
        <taxon>Herpesvirales</taxon>
        <taxon>Orthoherpesviridae</taxon>
        <taxon>Alphaherpesvirinae</taxon>
        <taxon>Varicellovirus</taxon>
        <taxon>Varicellovirus bovinealpha1</taxon>
    </lineage>
</organism>
<dbReference type="EMBL" id="AJ004801">
    <property type="protein sequence ID" value="CAA06084.1"/>
    <property type="molecule type" value="Genomic_DNA"/>
</dbReference>
<dbReference type="RefSeq" id="NP_045309.1">
    <property type="nucleotide sequence ID" value="NC_001847.1"/>
</dbReference>
<dbReference type="SMR" id="Q77CE4"/>
<dbReference type="IntAct" id="Q77CE4">
    <property type="interactions" value="5"/>
</dbReference>
<dbReference type="Proteomes" id="UP000202075">
    <property type="component" value="Segment"/>
</dbReference>
<dbReference type="GO" id="GO:0044165">
    <property type="term" value="C:host cell endoplasmic reticulum"/>
    <property type="evidence" value="ECO:0000314"/>
    <property type="project" value="AgBase"/>
</dbReference>
<dbReference type="GO" id="GO:0044177">
    <property type="term" value="C:host cell Golgi apparatus"/>
    <property type="evidence" value="ECO:0000315"/>
    <property type="project" value="AgBase"/>
</dbReference>
<dbReference type="GO" id="GO:0033644">
    <property type="term" value="C:host cell membrane"/>
    <property type="evidence" value="ECO:0007669"/>
    <property type="project" value="UniProtKB-SubCell"/>
</dbReference>
<dbReference type="GO" id="GO:0016020">
    <property type="term" value="C:membrane"/>
    <property type="evidence" value="ECO:0007669"/>
    <property type="project" value="UniProtKB-KW"/>
</dbReference>
<dbReference type="GO" id="GO:0019031">
    <property type="term" value="C:viral envelope"/>
    <property type="evidence" value="ECO:0007669"/>
    <property type="project" value="UniProtKB-KW"/>
</dbReference>
<dbReference type="GO" id="GO:0055036">
    <property type="term" value="C:virion membrane"/>
    <property type="evidence" value="ECO:0007669"/>
    <property type="project" value="UniProtKB-SubCell"/>
</dbReference>
<dbReference type="GO" id="GO:0046978">
    <property type="term" value="F:TAP1 binding"/>
    <property type="evidence" value="ECO:0000353"/>
    <property type="project" value="AgBase"/>
</dbReference>
<dbReference type="GO" id="GO:0046979">
    <property type="term" value="F:TAP2 binding"/>
    <property type="evidence" value="ECO:0000353"/>
    <property type="project" value="AgBase"/>
</dbReference>
<dbReference type="GO" id="GO:0046980">
    <property type="term" value="F:tapasin binding"/>
    <property type="evidence" value="ECO:0000353"/>
    <property type="project" value="AgBase"/>
</dbReference>
<dbReference type="GO" id="GO:0045862">
    <property type="term" value="P:positive regulation of proteolysis"/>
    <property type="evidence" value="ECO:0000315"/>
    <property type="project" value="AgBase"/>
</dbReference>
<dbReference type="GO" id="GO:0090087">
    <property type="term" value="P:regulation of peptide transport"/>
    <property type="evidence" value="ECO:0000315"/>
    <property type="project" value="AgBase"/>
</dbReference>
<dbReference type="GO" id="GO:0061635">
    <property type="term" value="P:regulation of protein complex stability"/>
    <property type="evidence" value="ECO:0000315"/>
    <property type="project" value="AgBase"/>
</dbReference>
<dbReference type="GO" id="GO:1903317">
    <property type="term" value="P:regulation of protein maturation"/>
    <property type="evidence" value="ECO:0000315"/>
    <property type="project" value="AgBase"/>
</dbReference>
<dbReference type="GO" id="GO:0046776">
    <property type="term" value="P:symbiont-mediated suppression of host antigen processing and presentation of peptide antigen via MHC class I"/>
    <property type="evidence" value="ECO:0000315"/>
    <property type="project" value="AgBase"/>
</dbReference>
<dbReference type="GO" id="GO:0039657">
    <property type="term" value="P:symbiont-mediated suppression of host gene expression"/>
    <property type="evidence" value="ECO:0000315"/>
    <property type="project" value="AgBase"/>
</dbReference>
<dbReference type="HAMAP" id="MF_04037">
    <property type="entry name" value="HSV_GN"/>
    <property type="match status" value="1"/>
</dbReference>
<dbReference type="InterPro" id="IPR008647">
    <property type="entry name" value="GN_domain"/>
</dbReference>
<dbReference type="InterPro" id="IPR034707">
    <property type="entry name" value="HSV_GN"/>
</dbReference>
<dbReference type="Pfam" id="PF05702">
    <property type="entry name" value="Herpes_UL49_5"/>
    <property type="match status" value="1"/>
</dbReference>
<name>GN_BHV1C</name>
<comment type="function">
    <text evidence="1">Envelope glycoprotein necessary for proper maturation of gM and modulation of its membrane fusion activity. Also plays a critical role in virion morphogenesis.</text>
</comment>
<comment type="subunit">
    <text evidence="1">Interacts (via N-terminus) with gM (via N-terminus). The gM-gN heterodimer forms the gCII complex.</text>
</comment>
<comment type="interaction">
    <interactant intactId="EBI-11303846">
        <id>Q77CE4</id>
    </interactant>
    <interactant intactId="EBI-747259">
        <id>Q03518</id>
        <label>TAP1</label>
    </interactant>
    <organismsDiffer>true</organismsDiffer>
    <experiments>6</experiments>
</comment>
<comment type="interaction">
    <interactant intactId="EBI-11303846">
        <id>Q77CE4</id>
    </interactant>
    <interactant intactId="EBI-11304494">
        <id>P36372</id>
        <label>Tap2</label>
    </interactant>
    <organismsDiffer>true</organismsDiffer>
    <experiments>2</experiments>
</comment>
<comment type="interaction">
    <interactant intactId="EBI-11303846">
        <id>Q77CE4</id>
    </interactant>
    <interactant intactId="EBI-780781">
        <id>Q03519</id>
        <label>TAP2</label>
    </interactant>
    <organismsDiffer>true</organismsDiffer>
    <experiments>2</experiments>
</comment>
<comment type="interaction">
    <interactant intactId="EBI-11303846">
        <id>Q77CE4</id>
    </interactant>
    <interactant intactId="EBI-874801">
        <id>O15533</id>
        <label>TAPBP</label>
    </interactant>
    <organismsDiffer>true</organismsDiffer>
    <experiments>2</experiments>
</comment>
<comment type="subcellular location">
    <subcellularLocation>
        <location evidence="1">Virion membrane</location>
        <topology evidence="1">Single-pass type I membrane protein</topology>
    </subcellularLocation>
    <subcellularLocation>
        <location evidence="1">Host membrane</location>
        <topology evidence="1">Single-pass type I membrane protein</topology>
    </subcellularLocation>
    <subcellularLocation>
        <location evidence="1">Host Golgi apparatus</location>
        <location evidence="1">Host trans-Golgi network</location>
    </subcellularLocation>
    <text evidence="1">When coexpressed with gM, localizes in the host trans-Golgi network.</text>
</comment>
<comment type="similarity">
    <text evidence="1">Belongs to the herpesviridae glycoprotein N family.</text>
</comment>